<reference key="1">
    <citation type="journal article" date="1999" name="Nature">
        <title>Sequence and analysis of chromosome 2 of the plant Arabidopsis thaliana.</title>
        <authorList>
            <person name="Lin X."/>
            <person name="Kaul S."/>
            <person name="Rounsley S.D."/>
            <person name="Shea T.P."/>
            <person name="Benito M.-I."/>
            <person name="Town C.D."/>
            <person name="Fujii C.Y."/>
            <person name="Mason T.M."/>
            <person name="Bowman C.L."/>
            <person name="Barnstead M.E."/>
            <person name="Feldblyum T.V."/>
            <person name="Buell C.R."/>
            <person name="Ketchum K.A."/>
            <person name="Lee J.J."/>
            <person name="Ronning C.M."/>
            <person name="Koo H.L."/>
            <person name="Moffat K.S."/>
            <person name="Cronin L.A."/>
            <person name="Shen M."/>
            <person name="Pai G."/>
            <person name="Van Aken S."/>
            <person name="Umayam L."/>
            <person name="Tallon L.J."/>
            <person name="Gill J.E."/>
            <person name="Adams M.D."/>
            <person name="Carrera A.J."/>
            <person name="Creasy T.H."/>
            <person name="Goodman H.M."/>
            <person name="Somerville C.R."/>
            <person name="Copenhaver G.P."/>
            <person name="Preuss D."/>
            <person name="Nierman W.C."/>
            <person name="White O."/>
            <person name="Eisen J.A."/>
            <person name="Salzberg S.L."/>
            <person name="Fraser C.M."/>
            <person name="Venter J.C."/>
        </authorList>
    </citation>
    <scope>NUCLEOTIDE SEQUENCE [LARGE SCALE GENOMIC DNA]</scope>
    <source>
        <strain>cv. Columbia</strain>
    </source>
</reference>
<reference key="2">
    <citation type="journal article" date="2017" name="Plant J.">
        <title>Araport11: a complete reannotation of the Arabidopsis thaliana reference genome.</title>
        <authorList>
            <person name="Cheng C.Y."/>
            <person name="Krishnakumar V."/>
            <person name="Chan A.P."/>
            <person name="Thibaud-Nissen F."/>
            <person name="Schobel S."/>
            <person name="Town C.D."/>
        </authorList>
    </citation>
    <scope>GENOME REANNOTATION</scope>
    <source>
        <strain>cv. Columbia</strain>
    </source>
</reference>
<reference key="3">
    <citation type="journal article" date="2003" name="J. Mol. Evol.">
        <title>Molecular phylogeny and evolution of the plant-specific seven-transmembrane MLO family.</title>
        <authorList>
            <person name="Devoto A."/>
            <person name="Hartmann H.A."/>
            <person name="Piffanelli P."/>
            <person name="Elliott C."/>
            <person name="Simmons C."/>
            <person name="Taramino G."/>
            <person name="Goh C.-S."/>
            <person name="Cohen F.E."/>
            <person name="Emerson B.C."/>
            <person name="Schulze-Lefert P."/>
            <person name="Panstruga R."/>
        </authorList>
    </citation>
    <scope>NUCLEOTIDE SEQUENCE OF 137-542</scope>
</reference>
<reference key="4">
    <citation type="journal article" date="2006" name="Plant Mol. Biol.">
        <title>Expression analysis of the AtMLO gene family encoding plant-specific seven-transmembrane domain proteins.</title>
        <authorList>
            <person name="Chen Z."/>
            <person name="Hartmann H.A."/>
            <person name="Wu M.J."/>
            <person name="Friedman E.J."/>
            <person name="Chen J.G."/>
            <person name="Pulley M."/>
            <person name="Schulze-Lefert P."/>
            <person name="Panstruga R."/>
            <person name="Jones A.M."/>
        </authorList>
    </citation>
    <scope>TISSUE SPECIFICITY</scope>
</reference>
<reference key="5">
    <citation type="journal article" date="2010" name="Science">
        <title>Conserved molecular components for pollen tube reception and fungal invasion.</title>
        <authorList>
            <person name="Kessler S.A."/>
            <person name="Shimosato-Asano H."/>
            <person name="Keinath N.F."/>
            <person name="Wuest S.E."/>
            <person name="Ingram G."/>
            <person name="Panstruga R."/>
            <person name="Grossniklaus U."/>
        </authorList>
    </citation>
    <scope>FUNCTION</scope>
    <scope>DISRUPTION PHENOTYPE</scope>
    <scope>SUBCELLULAR LOCATION</scope>
    <scope>TISSUE SPECIFICITY</scope>
</reference>
<accession>O22752</accession>
<accession>Q94KB6</accession>
<comment type="function">
    <text evidence="1 4">May be involved in modulation of pathogen defense and leaf cell death. Activity seems to be regulated by Ca(2+)-dependent calmodulin binding and seems not to require heterotrimeric G proteins (By similarity). Controls pollen tube reception in the female gametophyte synergids.</text>
</comment>
<comment type="subcellular location">
    <subcellularLocation>
        <location evidence="4">Cell membrane</location>
        <topology evidence="4">Multi-pass membrane protein</topology>
    </subcellularLocation>
    <subcellularLocation>
        <location evidence="4">Endomembrane system</location>
    </subcellularLocation>
    <text>In synergids of unfertilized mature female gametophytes, present in a punctate pattern of endomembranes throughout the cytoplasm. Become polarly localized to the basal half of the synergids, to the filiform apparatus, upon pollen tube arrival at the micropyle. This relocalization upon fertilization requires FER.</text>
</comment>
<comment type="tissue specificity">
    <text evidence="3 4">Restricted to pollen, synergids, pistils and immature anthers. Also detected in seedlings, leaves, stems and inflorescens.</text>
</comment>
<comment type="domain">
    <text evidence="1">The C-terminus contains a calmodulin-binding domain, which binds calmodulin in a calcium-dependent fashion.</text>
</comment>
<comment type="disruption phenotype">
    <text evidence="4">Impaired pollen tube reception in the female gametophyte synergids; the pollen tube fails to arrest and continues to grow inside the female gametophyte.</text>
</comment>
<comment type="similarity">
    <text evidence="5">Belongs to the MLO family.</text>
</comment>
<gene>
    <name type="primary">MLO7</name>
    <name type="synonym">NTA</name>
    <name type="ordered locus">At2g17430</name>
    <name type="ORF">F5J6.19</name>
</gene>
<organism>
    <name type="scientific">Arabidopsis thaliana</name>
    <name type="common">Mouse-ear cress</name>
    <dbReference type="NCBI Taxonomy" id="3702"/>
    <lineage>
        <taxon>Eukaryota</taxon>
        <taxon>Viridiplantae</taxon>
        <taxon>Streptophyta</taxon>
        <taxon>Embryophyta</taxon>
        <taxon>Tracheophyta</taxon>
        <taxon>Spermatophyta</taxon>
        <taxon>Magnoliopsida</taxon>
        <taxon>eudicotyledons</taxon>
        <taxon>Gunneridae</taxon>
        <taxon>Pentapetalae</taxon>
        <taxon>rosids</taxon>
        <taxon>malvids</taxon>
        <taxon>Brassicales</taxon>
        <taxon>Brassicaceae</taxon>
        <taxon>Camelineae</taxon>
        <taxon>Arabidopsis</taxon>
    </lineage>
</organism>
<dbReference type="EMBL" id="CP002685">
    <property type="protein sequence ID" value="AEC06624.1"/>
    <property type="molecule type" value="Genomic_DNA"/>
</dbReference>
<dbReference type="EMBL" id="AF369568">
    <property type="protein sequence ID" value="AAK53800.1"/>
    <property type="molecule type" value="mRNA"/>
</dbReference>
<dbReference type="PIR" id="B84552">
    <property type="entry name" value="B84552"/>
</dbReference>
<dbReference type="RefSeq" id="NP_179335.3">
    <property type="nucleotide sequence ID" value="NM_127298.5"/>
</dbReference>
<dbReference type="SMR" id="O22752"/>
<dbReference type="BioGRID" id="1606">
    <property type="interactions" value="4"/>
</dbReference>
<dbReference type="IntAct" id="O22752">
    <property type="interactions" value="3"/>
</dbReference>
<dbReference type="STRING" id="3702.O22752"/>
<dbReference type="TCDB" id="1.A.130.1.1">
    <property type="family name" value="the mildew-resistance locus o (mlo) family"/>
</dbReference>
<dbReference type="iPTMnet" id="O22752"/>
<dbReference type="PaxDb" id="3702-AT2G17430.1"/>
<dbReference type="ProteomicsDB" id="238378"/>
<dbReference type="EnsemblPlants" id="AT2G17430.1">
    <property type="protein sequence ID" value="AT2G17430.1"/>
    <property type="gene ID" value="AT2G17430"/>
</dbReference>
<dbReference type="GeneID" id="816249"/>
<dbReference type="Gramene" id="AT2G17430.1">
    <property type="protein sequence ID" value="AT2G17430.1"/>
    <property type="gene ID" value="AT2G17430"/>
</dbReference>
<dbReference type="KEGG" id="ath:AT2G17430"/>
<dbReference type="Araport" id="AT2G17430"/>
<dbReference type="TAIR" id="AT2G17430">
    <property type="gene designation" value="MLO7"/>
</dbReference>
<dbReference type="eggNOG" id="ENOG502QPZ5">
    <property type="taxonomic scope" value="Eukaryota"/>
</dbReference>
<dbReference type="HOGENOM" id="CLU_024720_1_0_1"/>
<dbReference type="InParanoid" id="O22752"/>
<dbReference type="OMA" id="QAIMATM"/>
<dbReference type="PhylomeDB" id="O22752"/>
<dbReference type="PRO" id="PR:O22752"/>
<dbReference type="Proteomes" id="UP000006548">
    <property type="component" value="Chromosome 2"/>
</dbReference>
<dbReference type="ExpressionAtlas" id="O22752">
    <property type="expression patterns" value="baseline and differential"/>
</dbReference>
<dbReference type="GO" id="GO:0005737">
    <property type="term" value="C:cytoplasm"/>
    <property type="evidence" value="ECO:0000314"/>
    <property type="project" value="TAIR"/>
</dbReference>
<dbReference type="GO" id="GO:0012505">
    <property type="term" value="C:endomembrane system"/>
    <property type="evidence" value="ECO:0000314"/>
    <property type="project" value="TAIR"/>
</dbReference>
<dbReference type="GO" id="GO:0005886">
    <property type="term" value="C:plasma membrane"/>
    <property type="evidence" value="ECO:0000314"/>
    <property type="project" value="TAIR"/>
</dbReference>
<dbReference type="GO" id="GO:0005516">
    <property type="term" value="F:calmodulin binding"/>
    <property type="evidence" value="ECO:0007669"/>
    <property type="project" value="UniProtKB-KW"/>
</dbReference>
<dbReference type="GO" id="GO:0006952">
    <property type="term" value="P:defense response"/>
    <property type="evidence" value="ECO:0007669"/>
    <property type="project" value="UniProtKB-KW"/>
</dbReference>
<dbReference type="GO" id="GO:0010483">
    <property type="term" value="P:pollen tube reception"/>
    <property type="evidence" value="ECO:0000315"/>
    <property type="project" value="TAIR"/>
</dbReference>
<dbReference type="InterPro" id="IPR004326">
    <property type="entry name" value="Mlo"/>
</dbReference>
<dbReference type="PANTHER" id="PTHR31942">
    <property type="entry name" value="MLO-LIKE PROTEIN 1"/>
    <property type="match status" value="1"/>
</dbReference>
<dbReference type="PANTHER" id="PTHR31942:SF79">
    <property type="entry name" value="MLO-LIKE PROTEIN 10-RELATED"/>
    <property type="match status" value="1"/>
</dbReference>
<dbReference type="Pfam" id="PF03094">
    <property type="entry name" value="Mlo"/>
    <property type="match status" value="1"/>
</dbReference>
<feature type="chain" id="PRO_0000209937" description="MLO-like protein 7">
    <location>
        <begin position="1"/>
        <end position="542"/>
    </location>
</feature>
<feature type="topological domain" description="Extracellular" evidence="2">
    <location>
        <begin position="1"/>
        <end position="38"/>
    </location>
</feature>
<feature type="transmembrane region" description="Helical; Name=1" evidence="2">
    <location>
        <begin position="39"/>
        <end position="59"/>
    </location>
</feature>
<feature type="topological domain" description="Cytoplasmic" evidence="2">
    <location>
        <begin position="60"/>
        <end position="82"/>
    </location>
</feature>
<feature type="transmembrane region" description="Helical; Name=2" evidence="2">
    <location>
        <begin position="83"/>
        <end position="103"/>
    </location>
</feature>
<feature type="topological domain" description="Extracellular" evidence="2">
    <location>
        <begin position="104"/>
        <end position="165"/>
    </location>
</feature>
<feature type="transmembrane region" description="Helical; Name=3" evidence="2">
    <location>
        <begin position="166"/>
        <end position="186"/>
    </location>
</feature>
<feature type="topological domain" description="Cytoplasmic" evidence="2">
    <location>
        <begin position="187"/>
        <end position="288"/>
    </location>
</feature>
<feature type="transmembrane region" description="Helical; Name=4" evidence="2">
    <location>
        <begin position="289"/>
        <end position="309"/>
    </location>
</feature>
<feature type="topological domain" description="Extracellular" evidence="2">
    <location>
        <begin position="310"/>
        <end position="315"/>
    </location>
</feature>
<feature type="transmembrane region" description="Helical; Name=5" evidence="2">
    <location>
        <begin position="316"/>
        <end position="336"/>
    </location>
</feature>
<feature type="topological domain" description="Cytoplasmic" evidence="2">
    <location>
        <begin position="337"/>
        <end position="374"/>
    </location>
</feature>
<feature type="transmembrane region" description="Helical; Name=6" evidence="2">
    <location>
        <begin position="375"/>
        <end position="395"/>
    </location>
</feature>
<feature type="topological domain" description="Extracellular" evidence="2">
    <location>
        <begin position="396"/>
        <end position="414"/>
    </location>
</feature>
<feature type="transmembrane region" description="Helical; Name=7" evidence="2">
    <location>
        <begin position="415"/>
        <end position="435"/>
    </location>
</feature>
<feature type="topological domain" description="Cytoplasmic" evidence="2">
    <location>
        <begin position="436"/>
        <end position="542"/>
    </location>
</feature>
<feature type="region of interest" description="Calmodulin-binding">
    <location>
        <begin position="449"/>
        <end position="470"/>
    </location>
</feature>
<proteinExistence type="evidence at transcript level"/>
<evidence type="ECO:0000250" key="1"/>
<evidence type="ECO:0000255" key="2"/>
<evidence type="ECO:0000269" key="3">
    <source>
    </source>
</evidence>
<evidence type="ECO:0000269" key="4">
    <source>
    </source>
</evidence>
<evidence type="ECO:0000305" key="5"/>
<name>MLO7_ARATH</name>
<keyword id="KW-0112">Calmodulin-binding</keyword>
<keyword id="KW-1003">Cell membrane</keyword>
<keyword id="KW-0472">Membrane</keyword>
<keyword id="KW-0568">Pathogenesis-related protein</keyword>
<keyword id="KW-0611">Plant defense</keyword>
<keyword id="KW-1185">Reference proteome</keyword>
<keyword id="KW-0812">Transmembrane</keyword>
<keyword id="KW-1133">Transmembrane helix</keyword>
<protein>
    <recommendedName>
        <fullName>MLO-like protein 7</fullName>
        <shortName>AtMlo7</shortName>
    </recommendedName>
    <alternativeName>
        <fullName>Protein NORTIA</fullName>
    </alternativeName>
</protein>
<sequence>MITRSRCRRSLLWFLVFHGGATATGAPSGGKELSQTPTWAVAVVCTFLILISHLLEKGLQRLANWLWKKHKNSLLEALEKIKAELMILGFISLLLTFGEPYILKICVPRKAALSMLPCLSEDTVLFQKLAPSSLSRHLLAAGDTSINCKQGSEPLITLKGLHQLHILLFFLAIFHIVYSLITMMLSRLKIRGWKKWEQETLSNDYEFSIDHSRLRLTHETSFVREHTSFWTTTPFFFYVGCFFRQFFVSVERTDYLTLRHGFISAHLAPGRKFNFQRYIKRSLEDDFKLVVGISPVLWASFVIFLLFNVNGWRTLFWASIPPLLIILAVGTKLQAIMATMALEIVETHAVVQGMPLVQGSDRYFWFDCPQLLLHLIHFALFQNAFQITHFFWIWYSFGLKSCFHKDFNLVVSKLFLCLGALILCSYITLPLYALVTQMGSHMKKAVFDEQMAKALKKWHKDIKLKKGKARKLPSKTLGVSESFSLSSSSSATTLHRSKTTGHSSNIIYYKQEDEEDEMSDLEAGAEDAIDRIQQQEMQFHNS</sequence>